<keyword id="KW-0472">Membrane</keyword>
<keyword id="KW-0496">Mitochondrion</keyword>
<keyword id="KW-0999">Mitochondrion inner membrane</keyword>
<keyword id="KW-0653">Protein transport</keyword>
<keyword id="KW-1185">Reference proteome</keyword>
<keyword id="KW-0811">Translocation</keyword>
<keyword id="KW-0812">Transmembrane</keyword>
<keyword id="KW-1133">Transmembrane helix</keyword>
<keyword id="KW-0813">Transport</keyword>
<feature type="chain" id="PRO_0000203063" description="Mitochondrial import inner membrane translocase subunit TIM54">
    <location>
        <begin position="1"/>
        <end position="400"/>
    </location>
</feature>
<feature type="topological domain" description="Mitochondrial matrix" evidence="2">
    <location>
        <begin position="1"/>
        <end position="32"/>
    </location>
</feature>
<feature type="transmembrane region" description="Helical" evidence="2">
    <location>
        <begin position="33"/>
        <end position="49"/>
    </location>
</feature>
<feature type="topological domain" description="Mitochondrial intermembrane" evidence="2">
    <location>
        <begin position="50"/>
        <end position="400"/>
    </location>
</feature>
<feature type="region of interest" description="Disordered" evidence="3">
    <location>
        <begin position="143"/>
        <end position="166"/>
    </location>
</feature>
<feature type="region of interest" description="Disordered" evidence="3">
    <location>
        <begin position="240"/>
        <end position="266"/>
    </location>
</feature>
<feature type="compositionally biased region" description="Basic and acidic residues" evidence="3">
    <location>
        <begin position="143"/>
        <end position="152"/>
    </location>
</feature>
<feature type="compositionally biased region" description="Basic and acidic residues" evidence="3">
    <location>
        <begin position="240"/>
        <end position="250"/>
    </location>
</feature>
<feature type="compositionally biased region" description="Acidic residues" evidence="3">
    <location>
        <begin position="251"/>
        <end position="261"/>
    </location>
</feature>
<feature type="sequence conflict" description="In Ref. 1; BAE44816." evidence="4" ref="1">
    <original>K</original>
    <variation>Q</variation>
    <location>
        <position position="273"/>
    </location>
</feature>
<feature type="sequence conflict" description="In Ref. 5; X78968." evidence="4" ref="5">
    <original>AP</original>
    <variation>EF</variation>
    <location>
        <begin position="283"/>
        <end position="284"/>
    </location>
</feature>
<feature type="sequence conflict" description="In Ref. 5; X78968." evidence="4" ref="5">
    <original>D</original>
    <variation>N</variation>
    <location>
        <position position="287"/>
    </location>
</feature>
<feature type="sequence conflict" description="In Ref. 5; X78968." evidence="4" ref="5">
    <original>L</original>
    <variation>I</variation>
    <location>
        <position position="333"/>
    </location>
</feature>
<feature type="sequence conflict" description="In Ref. 5; X78968." evidence="4" ref="5">
    <original>M</original>
    <variation>I</variation>
    <location>
        <position position="365"/>
    </location>
</feature>
<dbReference type="EMBL" id="AP006852">
    <property type="protein sequence ID" value="BAE44816.1"/>
    <property type="molecule type" value="Genomic_DNA"/>
</dbReference>
<dbReference type="EMBL" id="CP017629">
    <property type="protein sequence ID" value="AOW30657.1"/>
    <property type="molecule type" value="Genomic_DNA"/>
</dbReference>
<dbReference type="EMBL" id="X78968">
    <property type="status" value="NOT_ANNOTATED_CDS"/>
    <property type="molecule type" value="Genomic_DNA"/>
</dbReference>
<dbReference type="RefSeq" id="XP_716966.2">
    <property type="nucleotide sequence ID" value="XM_711873.2"/>
</dbReference>
<dbReference type="SMR" id="P48990"/>
<dbReference type="FunCoup" id="P48990">
    <property type="interactions" value="28"/>
</dbReference>
<dbReference type="STRING" id="237561.P48990"/>
<dbReference type="EnsemblFungi" id="C7_03120W_A-T">
    <property type="protein sequence ID" value="C7_03120W_A-T-p1"/>
    <property type="gene ID" value="C7_03120W_A"/>
</dbReference>
<dbReference type="GeneID" id="3641349"/>
<dbReference type="KEGG" id="cal:CAALFM_C703120WA"/>
<dbReference type="CGD" id="CAL0000174120">
    <property type="gene designation" value="TIM54"/>
</dbReference>
<dbReference type="VEuPathDB" id="FungiDB:C7_03120W_A"/>
<dbReference type="eggNOG" id="ENOG502QPMQ">
    <property type="taxonomic scope" value="Eukaryota"/>
</dbReference>
<dbReference type="HOGENOM" id="CLU_039097_0_0_1"/>
<dbReference type="InParanoid" id="P48990"/>
<dbReference type="OrthoDB" id="5598305at2759"/>
<dbReference type="Proteomes" id="UP000000559">
    <property type="component" value="Chromosome 7"/>
</dbReference>
<dbReference type="GO" id="GO:0005737">
    <property type="term" value="C:cytoplasm"/>
    <property type="evidence" value="ECO:0000318"/>
    <property type="project" value="GO_Central"/>
</dbReference>
<dbReference type="GO" id="GO:0043231">
    <property type="term" value="C:intracellular membrane-bounded organelle"/>
    <property type="evidence" value="ECO:0000318"/>
    <property type="project" value="GO_Central"/>
</dbReference>
<dbReference type="GO" id="GO:0016020">
    <property type="term" value="C:membrane"/>
    <property type="evidence" value="ECO:0000318"/>
    <property type="project" value="GO_Central"/>
</dbReference>
<dbReference type="GO" id="GO:0005743">
    <property type="term" value="C:mitochondrial inner membrane"/>
    <property type="evidence" value="ECO:0007669"/>
    <property type="project" value="UniProtKB-SubCell"/>
</dbReference>
<dbReference type="GO" id="GO:0015031">
    <property type="term" value="P:protein transport"/>
    <property type="evidence" value="ECO:0007669"/>
    <property type="project" value="UniProtKB-KW"/>
</dbReference>
<dbReference type="InterPro" id="IPR050187">
    <property type="entry name" value="Lipid_Phosphate_FormReg"/>
</dbReference>
<dbReference type="InterPro" id="IPR021056">
    <property type="entry name" value="Mt_import_IM_translocase_Tim54"/>
</dbReference>
<dbReference type="PANTHER" id="PTHR12358:SF101">
    <property type="entry name" value="MITOCHONDRIAL IMPORT INNER MEMBRANE TRANSLOCASE SUBUNIT TIM54"/>
    <property type="match status" value="1"/>
</dbReference>
<dbReference type="PANTHER" id="PTHR12358">
    <property type="entry name" value="SPHINGOSINE KINASE"/>
    <property type="match status" value="1"/>
</dbReference>
<dbReference type="Pfam" id="PF11711">
    <property type="entry name" value="Tim54"/>
    <property type="match status" value="1"/>
</dbReference>
<accession>P48990</accession>
<accession>A0A1D8PR89</accession>
<accession>Q3MP44</accession>
<accession>Q5A5D9</accession>
<accession>Q5A5K8</accession>
<name>TIM54_CANAL</name>
<protein>
    <recommendedName>
        <fullName>Mitochondrial import inner membrane translocase subunit TIM54</fullName>
    </recommendedName>
</protein>
<reference key="1">
    <citation type="journal article" date="2005" name="Genetics">
        <title>Sequence finishing and gene mapping for Candida albicans chromosome 7 and syntenic analysis against the Saccharomyces cerevisiae genome.</title>
        <authorList>
            <person name="Chibana H."/>
            <person name="Oka N."/>
            <person name="Nakayama H."/>
            <person name="Aoyama T."/>
            <person name="Magee B.B."/>
            <person name="Magee P.T."/>
            <person name="Mikami Y."/>
        </authorList>
    </citation>
    <scope>NUCLEOTIDE SEQUENCE [LARGE SCALE GENOMIC DNA]</scope>
    <source>
        <strain>SC5314 / ATCC MYA-2876</strain>
    </source>
</reference>
<reference key="2">
    <citation type="journal article" date="2004" name="Proc. Natl. Acad. Sci. U.S.A.">
        <title>The diploid genome sequence of Candida albicans.</title>
        <authorList>
            <person name="Jones T."/>
            <person name="Federspiel N.A."/>
            <person name="Chibana H."/>
            <person name="Dungan J."/>
            <person name="Kalman S."/>
            <person name="Magee B.B."/>
            <person name="Newport G."/>
            <person name="Thorstenson Y.R."/>
            <person name="Agabian N."/>
            <person name="Magee P.T."/>
            <person name="Davis R.W."/>
            <person name="Scherer S."/>
        </authorList>
    </citation>
    <scope>NUCLEOTIDE SEQUENCE [LARGE SCALE GENOMIC DNA]</scope>
    <source>
        <strain>SC5314 / ATCC MYA-2876</strain>
    </source>
</reference>
<reference key="3">
    <citation type="journal article" date="2007" name="Genome Biol.">
        <title>Assembly of the Candida albicans genome into sixteen supercontigs aligned on the eight chromosomes.</title>
        <authorList>
            <person name="van het Hoog M."/>
            <person name="Rast T.J."/>
            <person name="Martchenko M."/>
            <person name="Grindle S."/>
            <person name="Dignard D."/>
            <person name="Hogues H."/>
            <person name="Cuomo C."/>
            <person name="Berriman M."/>
            <person name="Scherer S."/>
            <person name="Magee B.B."/>
            <person name="Whiteway M."/>
            <person name="Chibana H."/>
            <person name="Nantel A."/>
            <person name="Magee P.T."/>
        </authorList>
    </citation>
    <scope>GENOME REANNOTATION</scope>
    <source>
        <strain>SC5314 / ATCC MYA-2876</strain>
    </source>
</reference>
<reference key="4">
    <citation type="journal article" date="2013" name="Genome Biol.">
        <title>Assembly of a phased diploid Candida albicans genome facilitates allele-specific measurements and provides a simple model for repeat and indel structure.</title>
        <authorList>
            <person name="Muzzey D."/>
            <person name="Schwartz K."/>
            <person name="Weissman J.S."/>
            <person name="Sherlock G."/>
        </authorList>
    </citation>
    <scope>NUCLEOTIDE SEQUENCE [LARGE SCALE GENOMIC DNA]</scope>
    <scope>GENOME REANNOTATION</scope>
    <source>
        <strain>SC5314 / ATCC MYA-2876</strain>
    </source>
</reference>
<reference key="5">
    <citation type="journal article" date="1994" name="Gene">
        <title>Sequence of a dihydrofolate reductase-encoding gene from Candida albicans.</title>
        <authorList>
            <person name="Daly S."/>
            <person name="Mastromei G."/>
            <person name="Yacoub A."/>
            <person name="Lorenzetti R."/>
        </authorList>
    </citation>
    <scope>NUCLEOTIDE SEQUENCE [GENOMIC DNA] OF 283-400</scope>
    <source>
        <strain>10127/5</strain>
    </source>
</reference>
<comment type="function">
    <text evidence="1">Essential component of the TIM22 complex, a complex that mediates the import and insertion of multi-pass transmembrane proteins into the mitochondrial inner membrane. The TIM22 complex forms a twin-pore translocase that uses the membrane potential as external driving force (By similarity).</text>
</comment>
<comment type="subunit">
    <text evidence="1">Component of the TIM22 complex, whose core is composed of TIM22 and TIM54, associated with the 70 kDa heterohexamer composed of TIM9 and TIM10 (or TIM8 and TIM13).</text>
</comment>
<comment type="subcellular location">
    <subcellularLocation>
        <location evidence="1">Mitochondrion inner membrane</location>
        <topology evidence="1">Single-pass membrane protein</topology>
    </subcellularLocation>
</comment>
<comment type="similarity">
    <text evidence="4">Belongs to the TIM54 family.</text>
</comment>
<proteinExistence type="inferred from homology"/>
<evidence type="ECO:0000250" key="1"/>
<evidence type="ECO:0000255" key="2"/>
<evidence type="ECO:0000256" key="3">
    <source>
        <dbReference type="SAM" id="MobiDB-lite"/>
    </source>
</evidence>
<evidence type="ECO:0000305" key="4"/>
<organism>
    <name type="scientific">Candida albicans (strain SC5314 / ATCC MYA-2876)</name>
    <name type="common">Yeast</name>
    <dbReference type="NCBI Taxonomy" id="237561"/>
    <lineage>
        <taxon>Eukaryota</taxon>
        <taxon>Fungi</taxon>
        <taxon>Dikarya</taxon>
        <taxon>Ascomycota</taxon>
        <taxon>Saccharomycotina</taxon>
        <taxon>Pichiomycetes</taxon>
        <taxon>Debaryomycetaceae</taxon>
        <taxon>Candida/Lodderomyces clade</taxon>
        <taxon>Candida</taxon>
    </lineage>
</organism>
<gene>
    <name type="primary">TIM54</name>
    <name type="ordered locus">CAALFM_C703120WA</name>
    <name type="ORF">CaJ7.0359</name>
    <name type="ORF">CaO19.12608</name>
    <name type="ORF">CaO19.5143</name>
</gene>
<sequence length="400" mass="46113">MPDANEVKPKKGWSNPALRMMGIPRISLPSRNWMIFWTVVTTIGGGIAYDKYEQKQMRKKWMDAVKQFGEVSYGANEIPRKLSIFIAPPPNDFLDESLKLFRKFIKPVLNAGVVDFEIFSESRQGDIRASVAEKIRELRRKQLVEETPKKNESNGNQDNDEEELKSRSDLYKAKDVLGLYKVFPADINVKSEDAIDDSSAGGIICVGRGAYKEYLSGVHEGLLGPLEKPQSVIDEETKLAEEKKKEKEENPDKDDDNDEEQSNLKPVPLRYIKPEDYANAQLAPELDLSTVVKDDKGVPVFFEQPVYTFPLPNLVGFTNIPRKIYRYFTKRFLVDDFGERTATIVNNKSRPFVYKDVLMAKEEEMDWPKKWVEKGKERNSEWVQELEHDERVTSRMKVFE</sequence>